<feature type="chain" id="PRO_0000089307" description="Capsule biosynthesis protein CapA">
    <location>
        <begin position="1"/>
        <end position="411"/>
    </location>
</feature>
<feature type="transmembrane region" description="Helical" evidence="1">
    <location>
        <begin position="25"/>
        <end position="44"/>
    </location>
</feature>
<feature type="region of interest" description="Disordered" evidence="2">
    <location>
        <begin position="386"/>
        <end position="411"/>
    </location>
</feature>
<feature type="compositionally biased region" description="Basic and acidic residues" evidence="2">
    <location>
        <begin position="386"/>
        <end position="403"/>
    </location>
</feature>
<feature type="sequence conflict" description="In Ref. 5." evidence="4" ref="5">
    <original>E</original>
    <variation>G</variation>
    <location>
        <position position="105"/>
    </location>
</feature>
<feature type="sequence conflict" description="In Ref. 1; AAA22288." evidence="4" ref="1">
    <original>T</original>
    <variation>A</variation>
    <location>
        <position position="345"/>
    </location>
</feature>
<proteinExistence type="evidence at transcript level"/>
<sequence length="411" mass="46453">MRRKLTFQEKLLIFIKKTKKKNPRYVAIVLPLIAVILIAATWVQRTEAVAPVKHRENEKLTMTMVGDIMMGRHVKEIVNRYGTDYVFRHVSPYLKNSDYVSGNFEHPVLLEDKKNYQKADKNIHLSAKEETVKAVKEAGFTVLNLANNHMTDYGAKGTKDTIKAFKEADLDYVGAGENFKDVKNIVYQNVNGVRVATLGFTDAFVAGAIATKEQPGSLSMNPDVLLKQISKAKDPKKGNADLVVVNTHWGEEYDNKPSPRQEALAKAMVDAGADIIVGHHPHVLQSFDVYKQGIIFYSLGNFVFDQGWTRTKDSALVQYHLRDNGTAILDVVPLNIQEGSPKPVTSALDKNRVYRQLTKDTSKGALWSKKDDKLEIKLNHKHVIEKMKKREKQEHQDKQEKENQVSVETTT</sequence>
<name>CAPA_BACAN</name>
<evidence type="ECO:0000255" key="1"/>
<evidence type="ECO:0000256" key="2">
    <source>
        <dbReference type="SAM" id="MobiDB-lite"/>
    </source>
</evidence>
<evidence type="ECO:0000269" key="3">
    <source>
    </source>
</evidence>
<evidence type="ECO:0000305" key="4"/>
<keyword id="KW-0972">Capsule biogenesis/degradation</keyword>
<keyword id="KW-1003">Cell membrane</keyword>
<keyword id="KW-0472">Membrane</keyword>
<keyword id="KW-0614">Plasmid</keyword>
<keyword id="KW-1185">Reference proteome</keyword>
<keyword id="KW-0812">Transmembrane</keyword>
<keyword id="KW-1133">Transmembrane helix</keyword>
<keyword id="KW-0843">Virulence</keyword>
<organism>
    <name type="scientific">Bacillus anthracis</name>
    <dbReference type="NCBI Taxonomy" id="1392"/>
    <lineage>
        <taxon>Bacteria</taxon>
        <taxon>Bacillati</taxon>
        <taxon>Bacillota</taxon>
        <taxon>Bacilli</taxon>
        <taxon>Bacillales</taxon>
        <taxon>Bacillaceae</taxon>
        <taxon>Bacillus</taxon>
        <taxon>Bacillus cereus group</taxon>
    </lineage>
</organism>
<geneLocation type="plasmid">
    <name>pXO2</name>
</geneLocation>
<geneLocation type="plasmid">
    <name>pTE702</name>
</geneLocation>
<protein>
    <recommendedName>
        <fullName>Capsule biosynthesis protein CapA</fullName>
    </recommendedName>
</protein>
<gene>
    <name type="primary">capA</name>
    <name type="ordered locus">pXO2-56</name>
    <name type="ordered locus">BXB0064</name>
    <name type="ordered locus">GBAA_pXO2_0064</name>
</gene>
<accession>P19579</accession>
<accession>Q9RMX6</accession>
<reference key="1">
    <citation type="journal article" date="1989" name="J. Bacteriol.">
        <title>Molecular characterization and protein analysis of the cap region, which is essential for encapsulation in Bacillus anthracis.</title>
        <authorList>
            <person name="Makino S."/>
            <person name="Uchida I."/>
            <person name="Terakado N."/>
            <person name="Sasakawa C."/>
            <person name="Yoshikawa M."/>
        </authorList>
    </citation>
    <scope>NUCLEOTIDE SEQUENCE [GENOMIC DNA]</scope>
    <source>
        <plasmid>pTE702</plasmid>
    </source>
</reference>
<reference key="2">
    <citation type="journal article" date="1999" name="J. Appl. Microbiol.">
        <title>Sequence, assembly and analysis of pXO1 and pXO2.</title>
        <authorList>
            <person name="Okinaka R.T."/>
            <person name="Cloud K."/>
            <person name="Hampton O."/>
            <person name="Hoffmaster A."/>
            <person name="Hill K.K."/>
            <person name="Keim P."/>
            <person name="Koehler T."/>
            <person name="Lamke G."/>
            <person name="Kumano S."/>
            <person name="Manter D."/>
            <person name="Martinez Y."/>
            <person name="Ricke D."/>
            <person name="Svensson R."/>
            <person name="Jackson P.J."/>
        </authorList>
    </citation>
    <scope>NUCLEOTIDE SEQUENCE [GENOMIC DNA]</scope>
    <source>
        <strain>Pasteur</strain>
        <plasmid>pXO2</plasmid>
    </source>
</reference>
<reference key="3">
    <citation type="journal article" date="2002" name="Science">
        <title>Comparative genome sequencing for discovery of novel polymorphisms in Bacillus anthracis.</title>
        <authorList>
            <person name="Read T.D."/>
            <person name="Salzberg S.L."/>
            <person name="Pop M."/>
            <person name="Shumway M.F."/>
            <person name="Umayam L."/>
            <person name="Jiang L."/>
            <person name="Holtzapple E."/>
            <person name="Busch J.D."/>
            <person name="Smith K.L."/>
            <person name="Schupp J.M."/>
            <person name="Solomon D."/>
            <person name="Keim P."/>
            <person name="Fraser C.M."/>
        </authorList>
    </citation>
    <scope>NUCLEOTIDE SEQUENCE [GENOMIC DNA]</scope>
    <source>
        <strain>Ames / isolate Florida / A2012</strain>
        <plasmid>pXO2</plasmid>
    </source>
</reference>
<reference key="4">
    <citation type="journal article" date="2009" name="J. Bacteriol.">
        <title>The complete genome sequence of Bacillus anthracis Ames 'Ancestor'.</title>
        <authorList>
            <person name="Ravel J."/>
            <person name="Jiang L."/>
            <person name="Stanley S.T."/>
            <person name="Wilson M.R."/>
            <person name="Decker R.S."/>
            <person name="Read T.D."/>
            <person name="Worsham P."/>
            <person name="Keim P.S."/>
            <person name="Salzberg S.L."/>
            <person name="Fraser-Liggett C.M."/>
            <person name="Rasko D.A."/>
        </authorList>
    </citation>
    <scope>NUCLEOTIDE SEQUENCE [LARGE SCALE GENOMIC DNA]</scope>
    <source>
        <strain>Ames ancestor</strain>
        <plasmid>pXO2</plasmid>
    </source>
</reference>
<reference key="5">
    <citation type="journal article" date="2004" name="Jpn. J. Infect. Dis.">
        <title>Preparation of a positive control DNA for molecular diagnosis of Bacillus anthracis.</title>
        <authorList>
            <person name="Inoue S."/>
            <person name="Noguchi A."/>
            <person name="Tanabayashi K."/>
            <person name="Yamada A."/>
        </authorList>
    </citation>
    <scope>NUCLEOTIDE SEQUENCE [GENOMIC DNA] OF 1-107</scope>
    <source>
        <strain>PAI</strain>
        <plasmid>pXO2</plasmid>
    </source>
</reference>
<reference key="6">
    <citation type="journal article" date="2004" name="J. Bacteriol.">
        <title>atxA controls Bacillus anthracis capsule synthesis via acpA and a newly discovered regulator, acpB.</title>
        <authorList>
            <person name="Drysdale M."/>
            <person name="Bourgogne A."/>
            <person name="Hilsenbeck S.G."/>
            <person name="Koehler T.M."/>
        </authorList>
    </citation>
    <scope>INDUCTION</scope>
    <source>
        <plasmid>pXO2</plasmid>
    </source>
</reference>
<dbReference type="EMBL" id="M24150">
    <property type="protein sequence ID" value="AAA22288.1"/>
    <property type="molecule type" value="Genomic_DNA"/>
</dbReference>
<dbReference type="EMBL" id="AF188935">
    <property type="protein sequence ID" value="AAF13661.1"/>
    <property type="molecule type" value="Genomic_DNA"/>
</dbReference>
<dbReference type="EMBL" id="AE011191">
    <property type="protein sequence ID" value="AAM26220.1"/>
    <property type="molecule type" value="Genomic_DNA"/>
</dbReference>
<dbReference type="EMBL" id="AE017335">
    <property type="protein sequence ID" value="AAT28994.2"/>
    <property type="molecule type" value="Genomic_DNA"/>
</dbReference>
<dbReference type="EMBL" id="AB125962">
    <property type="protein sequence ID" value="BAD14938.1"/>
    <property type="molecule type" value="Genomic_DNA"/>
</dbReference>
<dbReference type="PIR" id="C30091">
    <property type="entry name" value="C30091"/>
</dbReference>
<dbReference type="RefSeq" id="NP_053211.1">
    <property type="nucleotide sequence ID" value="NC_002146.1"/>
</dbReference>
<dbReference type="RefSeq" id="WP_001253154.1">
    <property type="nucleotide sequence ID" value="NZ_RXZJ01000072.1"/>
</dbReference>
<dbReference type="RefSeq" id="WP_001253155.1">
    <property type="nucleotide sequence ID" value="NZ_VTZL01000009.1"/>
</dbReference>
<dbReference type="SMR" id="P19579"/>
<dbReference type="GeneID" id="45025365"/>
<dbReference type="KEGG" id="bar:GBAA_pXO2_0064"/>
<dbReference type="HOGENOM" id="CLU_038823_2_2_9"/>
<dbReference type="OMA" id="HWGQEYD"/>
<dbReference type="BioCyc" id="MetaCyc:GBAA_PXO2_0064-MONOMER"/>
<dbReference type="UniPathway" id="UPA00934"/>
<dbReference type="Proteomes" id="UP000000594">
    <property type="component" value="Plasmid pXO2"/>
</dbReference>
<dbReference type="GO" id="GO:0005886">
    <property type="term" value="C:plasma membrane"/>
    <property type="evidence" value="ECO:0007669"/>
    <property type="project" value="UniProtKB-SubCell"/>
</dbReference>
<dbReference type="GO" id="GO:0045227">
    <property type="term" value="P:capsule polysaccharide biosynthetic process"/>
    <property type="evidence" value="ECO:0007669"/>
    <property type="project" value="UniProtKB-UniPathway"/>
</dbReference>
<dbReference type="CDD" id="cd07381">
    <property type="entry name" value="MPP_CapA"/>
    <property type="match status" value="1"/>
</dbReference>
<dbReference type="Gene3D" id="3.60.21.10">
    <property type="match status" value="1"/>
</dbReference>
<dbReference type="InterPro" id="IPR019079">
    <property type="entry name" value="Capsule_synth_CapA"/>
</dbReference>
<dbReference type="InterPro" id="IPR052169">
    <property type="entry name" value="CW_Biosynth-Accessory"/>
</dbReference>
<dbReference type="InterPro" id="IPR029052">
    <property type="entry name" value="Metallo-depent_PP-like"/>
</dbReference>
<dbReference type="PANTHER" id="PTHR33393:SF13">
    <property type="entry name" value="PGA BIOSYNTHESIS PROTEIN CAPA"/>
    <property type="match status" value="1"/>
</dbReference>
<dbReference type="PANTHER" id="PTHR33393">
    <property type="entry name" value="POLYGLUTAMINE SYNTHESIS ACCESSORY PROTEIN RV0574C-RELATED"/>
    <property type="match status" value="1"/>
</dbReference>
<dbReference type="Pfam" id="PF09587">
    <property type="entry name" value="PGA_cap"/>
    <property type="match status" value="1"/>
</dbReference>
<dbReference type="SMART" id="SM00854">
    <property type="entry name" value="PGA_cap"/>
    <property type="match status" value="1"/>
</dbReference>
<dbReference type="SUPFAM" id="SSF56300">
    <property type="entry name" value="Metallo-dependent phosphatases"/>
    <property type="match status" value="1"/>
</dbReference>
<comment type="function">
    <text>Essential for the synthesis of the polyglutamate capsule of B.anthracis which is one of the principal virulence factors during anthrax infection. May form a polyglutamyl synthetase complex together with proteins CapB and CapC.</text>
</comment>
<comment type="pathway">
    <text>Capsule biogenesis; capsule polysaccharide biosynthesis.</text>
</comment>
<comment type="subcellular location">
    <subcellularLocation>
        <location>Cell membrane</location>
        <topology>Single-pass membrane protein</topology>
    </subcellularLocation>
</comment>
<comment type="induction">
    <text evidence="3">Capsule synthesis is transcriptionally regulated by AtxA, AcpA and AcpB.</text>
</comment>
<comment type="similarity">
    <text evidence="4">Belongs to the CapA family.</text>
</comment>